<keyword id="KW-0156">Chromatin regulator</keyword>
<keyword id="KW-0963">Cytoplasm</keyword>
<keyword id="KW-0488">Methylation</keyword>
<keyword id="KW-0489">Methyltransferase</keyword>
<keyword id="KW-0539">Nucleus</keyword>
<keyword id="KW-1185">Reference proteome</keyword>
<keyword id="KW-0949">S-adenosyl-L-methionine</keyword>
<keyword id="KW-0804">Transcription</keyword>
<keyword id="KW-0805">Transcription regulation</keyword>
<keyword id="KW-0808">Transferase</keyword>
<comment type="function">
    <text evidence="5">Methylates (mono- and asymmetric dimethylation) the guanidino nitrogens of arginyl residues in proteins. May methylate histone H3 at 'Arg-17' and activate transcription via chromatin remodeling.</text>
</comment>
<comment type="catalytic activity">
    <reaction evidence="5">
        <text>L-arginyl-[protein] + 2 S-adenosyl-L-methionine = N(omega),N(omega)-dimethyl-L-arginyl-[protein] + 2 S-adenosyl-L-homocysteine + 2 H(+)</text>
        <dbReference type="Rhea" id="RHEA:48096"/>
        <dbReference type="Rhea" id="RHEA-COMP:10532"/>
        <dbReference type="Rhea" id="RHEA-COMP:11991"/>
        <dbReference type="ChEBI" id="CHEBI:15378"/>
        <dbReference type="ChEBI" id="CHEBI:29965"/>
        <dbReference type="ChEBI" id="CHEBI:57856"/>
        <dbReference type="ChEBI" id="CHEBI:59789"/>
        <dbReference type="ChEBI" id="CHEBI:61897"/>
        <dbReference type="EC" id="2.1.1.319"/>
    </reaction>
</comment>
<comment type="subunit">
    <text evidence="5">Homodimer.</text>
</comment>
<comment type="subcellular location">
    <subcellularLocation>
        <location evidence="2">Cytoplasm</location>
    </subcellularLocation>
    <subcellularLocation>
        <location evidence="2">Nucleus</location>
    </subcellularLocation>
</comment>
<comment type="PTM">
    <text>The dimethylated protein is the major form.</text>
</comment>
<comment type="similarity">
    <text evidence="3">Belongs to the class I-like SAM-binding methyltransferase superfamily. Protein arginine N-methyltransferase family.</text>
</comment>
<accession>Q7Q2B7</accession>
<accession>B7TWH1</accession>
<name>CARM1_ANOGA</name>
<feature type="chain" id="PRO_0000382219" description="Histone-arginine methyltransferase CARMER">
    <location>
        <begin position="1"/>
        <end position="622"/>
    </location>
</feature>
<feature type="domain" description="SAM-dependent MTase PRMT-type" evidence="3">
    <location>
        <begin position="118"/>
        <end position="425"/>
    </location>
</feature>
<feature type="region of interest" description="Disordered" evidence="4">
    <location>
        <begin position="513"/>
        <end position="556"/>
    </location>
</feature>
<feature type="region of interest" description="Disordered" evidence="4">
    <location>
        <begin position="602"/>
        <end position="622"/>
    </location>
</feature>
<feature type="compositionally biased region" description="Low complexity" evidence="4">
    <location>
        <begin position="536"/>
        <end position="556"/>
    </location>
</feature>
<feature type="binding site" evidence="1">
    <location>
        <position position="131"/>
    </location>
    <ligand>
        <name>S-adenosyl-L-methionine</name>
        <dbReference type="ChEBI" id="CHEBI:59789"/>
    </ligand>
</feature>
<feature type="binding site" evidence="1">
    <location>
        <position position="140"/>
    </location>
    <ligand>
        <name>S-adenosyl-L-methionine</name>
        <dbReference type="ChEBI" id="CHEBI:59789"/>
    </ligand>
</feature>
<feature type="binding site" evidence="1">
    <location>
        <position position="164"/>
    </location>
    <ligand>
        <name>S-adenosyl-L-methionine</name>
        <dbReference type="ChEBI" id="CHEBI:59789"/>
    </ligand>
</feature>
<feature type="binding site" evidence="1">
    <location>
        <position position="186"/>
    </location>
    <ligand>
        <name>S-adenosyl-L-methionine</name>
        <dbReference type="ChEBI" id="CHEBI:59789"/>
    </ligand>
</feature>
<feature type="binding site" evidence="1">
    <location>
        <position position="215"/>
    </location>
    <ligand>
        <name>S-adenosyl-L-methionine</name>
        <dbReference type="ChEBI" id="CHEBI:59789"/>
    </ligand>
</feature>
<feature type="binding site" evidence="1">
    <location>
        <position position="243"/>
    </location>
    <ligand>
        <name>S-adenosyl-L-methionine</name>
        <dbReference type="ChEBI" id="CHEBI:59789"/>
    </ligand>
</feature>
<feature type="modified residue" description="Asymmetric dimethylarginine; by autocatalysis" evidence="5">
    <location>
        <position position="478"/>
    </location>
</feature>
<feature type="mutagenesis site" description="Destroys the dimethylation site." evidence="5">
    <original>R</original>
    <variation>K</variation>
    <location>
        <position position="478"/>
    </location>
</feature>
<organism>
    <name type="scientific">Anopheles gambiae</name>
    <name type="common">African malaria mosquito</name>
    <dbReference type="NCBI Taxonomy" id="7165"/>
    <lineage>
        <taxon>Eukaryota</taxon>
        <taxon>Metazoa</taxon>
        <taxon>Ecdysozoa</taxon>
        <taxon>Arthropoda</taxon>
        <taxon>Hexapoda</taxon>
        <taxon>Insecta</taxon>
        <taxon>Pterygota</taxon>
        <taxon>Neoptera</taxon>
        <taxon>Endopterygota</taxon>
        <taxon>Diptera</taxon>
        <taxon>Nematocera</taxon>
        <taxon>Culicoidea</taxon>
        <taxon>Culicidae</taxon>
        <taxon>Anophelinae</taxon>
        <taxon>Anopheles</taxon>
    </lineage>
</organism>
<reference key="1">
    <citation type="journal article" date="2002" name="Science">
        <title>The genome sequence of the malaria mosquito Anopheles gambiae.</title>
        <authorList>
            <person name="Holt R.A."/>
            <person name="Subramanian G.M."/>
            <person name="Halpern A."/>
            <person name="Sutton G.G."/>
            <person name="Charlab R."/>
            <person name="Nusskern D.R."/>
            <person name="Wincker P."/>
            <person name="Clark A.G."/>
            <person name="Ribeiro J.M.C."/>
            <person name="Wides R."/>
            <person name="Salzberg S.L."/>
            <person name="Loftus B.J."/>
            <person name="Yandell M.D."/>
            <person name="Majoros W.H."/>
            <person name="Rusch D.B."/>
            <person name="Lai Z."/>
            <person name="Kraft C.L."/>
            <person name="Abril J.F."/>
            <person name="Anthouard V."/>
            <person name="Arensburger P."/>
            <person name="Atkinson P.W."/>
            <person name="Baden H."/>
            <person name="de Berardinis V."/>
            <person name="Baldwin D."/>
            <person name="Benes V."/>
            <person name="Biedler J."/>
            <person name="Blass C."/>
            <person name="Bolanos R."/>
            <person name="Boscus D."/>
            <person name="Barnstead M."/>
            <person name="Cai S."/>
            <person name="Center A."/>
            <person name="Chaturverdi K."/>
            <person name="Christophides G.K."/>
            <person name="Chrystal M.A.M."/>
            <person name="Clamp M."/>
            <person name="Cravchik A."/>
            <person name="Curwen V."/>
            <person name="Dana A."/>
            <person name="Delcher A."/>
            <person name="Dew I."/>
            <person name="Evans C.A."/>
            <person name="Flanigan M."/>
            <person name="Grundschober-Freimoser A."/>
            <person name="Friedli L."/>
            <person name="Gu Z."/>
            <person name="Guan P."/>
            <person name="Guigo R."/>
            <person name="Hillenmeyer M.E."/>
            <person name="Hladun S.L."/>
            <person name="Hogan J.R."/>
            <person name="Hong Y.S."/>
            <person name="Hoover J."/>
            <person name="Jaillon O."/>
            <person name="Ke Z."/>
            <person name="Kodira C.D."/>
            <person name="Kokoza E."/>
            <person name="Koutsos A."/>
            <person name="Letunic I."/>
            <person name="Levitsky A.A."/>
            <person name="Liang Y."/>
            <person name="Lin J.-J."/>
            <person name="Lobo N.F."/>
            <person name="Lopez J.R."/>
            <person name="Malek J.A."/>
            <person name="McIntosh T.C."/>
            <person name="Meister S."/>
            <person name="Miller J.R."/>
            <person name="Mobarry C."/>
            <person name="Mongin E."/>
            <person name="Murphy S.D."/>
            <person name="O'Brochta D.A."/>
            <person name="Pfannkoch C."/>
            <person name="Qi R."/>
            <person name="Regier M.A."/>
            <person name="Remington K."/>
            <person name="Shao H."/>
            <person name="Sharakhova M.V."/>
            <person name="Sitter C.D."/>
            <person name="Shetty J."/>
            <person name="Smith T.J."/>
            <person name="Strong R."/>
            <person name="Sun J."/>
            <person name="Thomasova D."/>
            <person name="Ton L.Q."/>
            <person name="Topalis P."/>
            <person name="Tu Z.J."/>
            <person name="Unger M.F."/>
            <person name="Walenz B."/>
            <person name="Wang A.H."/>
            <person name="Wang J."/>
            <person name="Wang M."/>
            <person name="Wang X."/>
            <person name="Woodford K.J."/>
            <person name="Wortman J.R."/>
            <person name="Wu M."/>
            <person name="Yao A."/>
            <person name="Zdobnov E.M."/>
            <person name="Zhang H."/>
            <person name="Zhao Q."/>
            <person name="Zhao S."/>
            <person name="Zhu S.C."/>
            <person name="Zhimulev I."/>
            <person name="Coluzzi M."/>
            <person name="della Torre A."/>
            <person name="Roth C.W."/>
            <person name="Louis C."/>
            <person name="Kalush F."/>
            <person name="Mural R.J."/>
            <person name="Myers E.W."/>
            <person name="Adams M.D."/>
            <person name="Smith H.O."/>
            <person name="Broder S."/>
            <person name="Gardner M.J."/>
            <person name="Fraser C.M."/>
            <person name="Birney E."/>
            <person name="Bork P."/>
            <person name="Brey P.T."/>
            <person name="Venter J.C."/>
            <person name="Weissenbach J."/>
            <person name="Kafatos F.C."/>
            <person name="Collins F.H."/>
            <person name="Hoffman S.L."/>
        </authorList>
    </citation>
    <scope>NUCLEOTIDE SEQUENCE [LARGE SCALE GENOMIC DNA]</scope>
    <source>
        <strain>PEST</strain>
    </source>
</reference>
<reference key="2">
    <citation type="journal article" date="2009" name="Protein Sci.">
        <title>Delineating Anopheles gambiae coactivator associated arginine methyltransferase 1 automethylation using top-down high resolution tandem mass spectrometry.</title>
        <authorList>
            <person name="Kuhn P."/>
            <person name="Xu Q."/>
            <person name="Cline E."/>
            <person name="Zhang D."/>
            <person name="Ge Y."/>
            <person name="Xu W."/>
        </authorList>
    </citation>
    <scope>NUCLEOTIDE SEQUENCE [MRNA]</scope>
    <scope>FUNCTION</scope>
    <scope>CATALYTIC ACTIVITY</scope>
    <scope>SUBUNIT</scope>
    <scope>IDENTIFICATION BY MASS SPECTROMETRY</scope>
    <scope>METHYLATION AT ARG-478</scope>
    <scope>MUTAGENESIS OF ARG-478</scope>
    <source>
        <strain evidence="5">G3</strain>
    </source>
</reference>
<sequence>MARMQGCSVLVLDDSDKLVNKYDHKVTVVCSYDPQGMAVRLLQEGATPPKQLEEYLVSGAGTTHLSRGHTSHMLVVGGELVLFRFASRGDCQQFRSLLHKLSGKVNSVFNLRTEDSSASQYFQFYGYLSQQQNMMQDFVRTSTYQRAIYNNAQDFQNKIVLDVGAGSGILSFFAVQAGAAKVYAVEASNMAQYAQQLVSSNNLTDRIIVIAGKIEEIDLPERVDVIISEPMGYMLYNERMLETYLHGKKWLKPDGKMYPSRGDLHVAPFTDEALYMEQYNKANFWMQTEFHGVNLVALRDAAMKEYFRQPIVDTFDIRICMAKSIRHTTNFLTADEKDLHRIQIDVEFHMLETGTCHGLAFWFDVEFAGTCSQIWLSTSPTEPLTHWYQVRCLLQTPIFVKQGQVLSGKVVLAANQRQSYDVEIDLKLEGTMISSSNTLDLKNPYFRYTGAPVAAPPGSNTTSPSEAFWSQLDAQGARNAVNLVNGITVNGLGEVDMSSTIINTNLMAIGGGANGGGPGGHQPNIHPGLISSTGRQQQQQQQQQQQQAAVGPQQQQQQQSTTAQQLAMTPPIGCAATSTQNVAQHQLIGGAISPSLFTSPAQPILNSHHHHPGQPIHGNQFY</sequence>
<evidence type="ECO:0000250" key="1"/>
<evidence type="ECO:0000250" key="2">
    <source>
        <dbReference type="UniProtKB" id="Q9VH48"/>
    </source>
</evidence>
<evidence type="ECO:0000255" key="3">
    <source>
        <dbReference type="PROSITE-ProRule" id="PRU01015"/>
    </source>
</evidence>
<evidence type="ECO:0000256" key="4">
    <source>
        <dbReference type="SAM" id="MobiDB-lite"/>
    </source>
</evidence>
<evidence type="ECO:0000269" key="5">
    <source>
    </source>
</evidence>
<evidence type="ECO:0000303" key="6">
    <source>
    </source>
</evidence>
<evidence type="ECO:0000312" key="7">
    <source>
        <dbReference type="EMBL" id="ACJ24894.1"/>
    </source>
</evidence>
<protein>
    <recommendedName>
        <fullName evidence="6">Histone-arginine methyltransferase CARMER</fullName>
        <ecNumber evidence="5">2.1.1.319</ecNumber>
    </recommendedName>
    <alternativeName>
        <fullName evidence="6">Coactivator-associated arginine methyltransferase 1</fullName>
        <shortName evidence="6">AgCARM1</shortName>
    </alternativeName>
</protein>
<gene>
    <name evidence="7" type="primary">CARM1</name>
    <name type="ORF">AGAP003923</name>
</gene>
<dbReference type="EC" id="2.1.1.319" evidence="5"/>
<dbReference type="EMBL" id="AAAB01008978">
    <property type="protein sequence ID" value="EAA13615.4"/>
    <property type="molecule type" value="Genomic_DNA"/>
</dbReference>
<dbReference type="EMBL" id="FJ391182">
    <property type="protein sequence ID" value="ACJ24894.1"/>
    <property type="molecule type" value="mRNA"/>
</dbReference>
<dbReference type="RefSeq" id="XP_318375.4">
    <property type="nucleotide sequence ID" value="XM_318375.4"/>
</dbReference>
<dbReference type="SMR" id="Q7Q2B7"/>
<dbReference type="FunCoup" id="Q7Q2B7">
    <property type="interactions" value="2582"/>
</dbReference>
<dbReference type="STRING" id="7165.Q7Q2B7"/>
<dbReference type="iPTMnet" id="Q7Q2B7"/>
<dbReference type="PaxDb" id="7165-AGAP003923-PA"/>
<dbReference type="VEuPathDB" id="VectorBase:AGAMI1_013375"/>
<dbReference type="VEuPathDB" id="VectorBase:AGAP003923"/>
<dbReference type="eggNOG" id="KOG1500">
    <property type="taxonomic scope" value="Eukaryota"/>
</dbReference>
<dbReference type="HOGENOM" id="CLU_017375_0_1_1"/>
<dbReference type="InParanoid" id="Q7Q2B7"/>
<dbReference type="OMA" id="ASNMAHH"/>
<dbReference type="PhylomeDB" id="Q7Q2B7"/>
<dbReference type="Proteomes" id="UP000007062">
    <property type="component" value="Chromosome 2R"/>
</dbReference>
<dbReference type="GO" id="GO:0005737">
    <property type="term" value="C:cytoplasm"/>
    <property type="evidence" value="ECO:0000250"/>
    <property type="project" value="UniProtKB"/>
</dbReference>
<dbReference type="GO" id="GO:0005634">
    <property type="term" value="C:nucleus"/>
    <property type="evidence" value="ECO:0000250"/>
    <property type="project" value="UniProtKB"/>
</dbReference>
<dbReference type="GO" id="GO:0035642">
    <property type="term" value="F:histone H3R17 methyltransferase activity"/>
    <property type="evidence" value="ECO:0000250"/>
    <property type="project" value="UniProtKB"/>
</dbReference>
<dbReference type="GO" id="GO:0070611">
    <property type="term" value="F:histone H3R2 methyltransferase activity"/>
    <property type="evidence" value="ECO:0000250"/>
    <property type="project" value="UniProtKB"/>
</dbReference>
<dbReference type="GO" id="GO:0140903">
    <property type="term" value="F:histone H3R26 methyltransferase activity"/>
    <property type="evidence" value="ECO:0000250"/>
    <property type="project" value="UniProtKB"/>
</dbReference>
<dbReference type="GO" id="GO:0035242">
    <property type="term" value="F:protein-arginine omega-N asymmetric methyltransferase activity"/>
    <property type="evidence" value="ECO:0000314"/>
    <property type="project" value="UniProtKB"/>
</dbReference>
<dbReference type="GO" id="GO:0035241">
    <property type="term" value="F:protein-arginine omega-N monomethyltransferase activity"/>
    <property type="evidence" value="ECO:0000314"/>
    <property type="project" value="UniProtKB"/>
</dbReference>
<dbReference type="GO" id="GO:0006338">
    <property type="term" value="P:chromatin remodeling"/>
    <property type="evidence" value="ECO:0000314"/>
    <property type="project" value="UniProtKB"/>
</dbReference>
<dbReference type="GO" id="GO:0019919">
    <property type="term" value="P:peptidyl-arginine methylation, to asymmetrical-dimethyl arginine"/>
    <property type="evidence" value="ECO:0000314"/>
    <property type="project" value="UniProtKB"/>
</dbReference>
<dbReference type="GO" id="GO:0006355">
    <property type="term" value="P:regulation of DNA-templated transcription"/>
    <property type="evidence" value="ECO:0000314"/>
    <property type="project" value="UniProtKB"/>
</dbReference>
<dbReference type="CDD" id="cd02440">
    <property type="entry name" value="AdoMet_MTases"/>
    <property type="match status" value="1"/>
</dbReference>
<dbReference type="FunFam" id="2.70.160.11:FF:000002">
    <property type="entry name" value="Probable histone-arginine methyltransferase CARM1"/>
    <property type="match status" value="1"/>
</dbReference>
<dbReference type="FunFam" id="3.40.50.150:FF:000031">
    <property type="entry name" value="Putative Histone-arginine methyltransferase CARM1"/>
    <property type="match status" value="1"/>
</dbReference>
<dbReference type="Gene3D" id="2.70.160.11">
    <property type="entry name" value="Hnrnp arginine n-methyltransferase1"/>
    <property type="match status" value="1"/>
</dbReference>
<dbReference type="Gene3D" id="3.40.50.150">
    <property type="entry name" value="Vaccinia Virus protein VP39"/>
    <property type="match status" value="1"/>
</dbReference>
<dbReference type="InterPro" id="IPR025799">
    <property type="entry name" value="Arg_MeTrfase"/>
</dbReference>
<dbReference type="InterPro" id="IPR055135">
    <property type="entry name" value="PRMT_dom"/>
</dbReference>
<dbReference type="InterPro" id="IPR029063">
    <property type="entry name" value="SAM-dependent_MTases_sf"/>
</dbReference>
<dbReference type="PANTHER" id="PTHR11006:SF10">
    <property type="entry name" value="HISTONE-ARGININE METHYLTRANSFERASE CARMER-RELATED"/>
    <property type="match status" value="1"/>
</dbReference>
<dbReference type="PANTHER" id="PTHR11006">
    <property type="entry name" value="PROTEIN ARGININE N-METHYLTRANSFERASE"/>
    <property type="match status" value="1"/>
</dbReference>
<dbReference type="Pfam" id="PF06325">
    <property type="entry name" value="PrmA"/>
    <property type="match status" value="1"/>
</dbReference>
<dbReference type="Pfam" id="PF22528">
    <property type="entry name" value="PRMT_C"/>
    <property type="match status" value="1"/>
</dbReference>
<dbReference type="SUPFAM" id="SSF53335">
    <property type="entry name" value="S-adenosyl-L-methionine-dependent methyltransferases"/>
    <property type="match status" value="1"/>
</dbReference>
<dbReference type="PROSITE" id="PS51678">
    <property type="entry name" value="SAM_MT_PRMT"/>
    <property type="match status" value="1"/>
</dbReference>
<proteinExistence type="evidence at protein level"/>